<accession>Q5LMR5</accession>
<feature type="chain" id="PRO_0000337544" description="Elongation factor Tu">
    <location>
        <begin position="1"/>
        <end position="391"/>
    </location>
</feature>
<feature type="domain" description="tr-type G">
    <location>
        <begin position="10"/>
        <end position="201"/>
    </location>
</feature>
<feature type="region of interest" description="G1" evidence="1">
    <location>
        <begin position="19"/>
        <end position="26"/>
    </location>
</feature>
<feature type="region of interest" description="G2" evidence="1">
    <location>
        <begin position="55"/>
        <end position="59"/>
    </location>
</feature>
<feature type="region of interest" description="G3" evidence="1">
    <location>
        <begin position="76"/>
        <end position="79"/>
    </location>
</feature>
<feature type="region of interest" description="G4" evidence="1">
    <location>
        <begin position="131"/>
        <end position="134"/>
    </location>
</feature>
<feature type="region of interest" description="G5" evidence="1">
    <location>
        <begin position="169"/>
        <end position="171"/>
    </location>
</feature>
<feature type="binding site" evidence="2">
    <location>
        <begin position="19"/>
        <end position="26"/>
    </location>
    <ligand>
        <name>GTP</name>
        <dbReference type="ChEBI" id="CHEBI:37565"/>
    </ligand>
</feature>
<feature type="binding site" evidence="2">
    <location>
        <position position="26"/>
    </location>
    <ligand>
        <name>Mg(2+)</name>
        <dbReference type="ChEBI" id="CHEBI:18420"/>
    </ligand>
</feature>
<feature type="binding site" evidence="2">
    <location>
        <begin position="76"/>
        <end position="80"/>
    </location>
    <ligand>
        <name>GTP</name>
        <dbReference type="ChEBI" id="CHEBI:37565"/>
    </ligand>
</feature>
<feature type="binding site" evidence="2">
    <location>
        <begin position="131"/>
        <end position="134"/>
    </location>
    <ligand>
        <name>GTP</name>
        <dbReference type="ChEBI" id="CHEBI:37565"/>
    </ligand>
</feature>
<sequence>MAKEKFERSKPHVNIGTIGHVDHGKTTLTAAITKYFGDFKAYDQIDGAPEEKARGITISTAHVEYETDSRHYAHVDCPGHADYVKNMITGAAQMDGAILVVNAADGPMPQTREHILLGRQVGIPFMVVYMNKVDQVDDEELLELVEMEIRELLSSYDYPGDDIPIIRGSALHAMNGTEPSMGEESIRALMAAVDEYIPTPARAVDQPFLMPIEDVFSISGRGTVVTGRVERGVINVGDSIEIVGIRDTKTTTCTGVEMFRKLLDRGEAGDNIGALLRGIDREGVERGQVLCKPGSVTPHTKFEAEAYILTKEEGGRHTPFFANYRPQFYFRTTDVTGTVTLAEGTEMVMPGDNVGFTVELIAPIAMEDGLRFAIREGGRTVGAGVVSKIIE</sequence>
<dbReference type="EC" id="3.6.5.3" evidence="2"/>
<dbReference type="EMBL" id="CP000031">
    <property type="protein sequence ID" value="AAV94034.1"/>
    <property type="molecule type" value="Genomic_DNA"/>
</dbReference>
<dbReference type="EMBL" id="CP000031">
    <property type="protein sequence ID" value="AAV96723.1"/>
    <property type="molecule type" value="Genomic_DNA"/>
</dbReference>
<dbReference type="RefSeq" id="WP_011046478.1">
    <property type="nucleotide sequence ID" value="NC_003911.12"/>
</dbReference>
<dbReference type="SMR" id="Q5LMR5"/>
<dbReference type="STRING" id="246200.SPO0728"/>
<dbReference type="PaxDb" id="246200-SPO0728"/>
<dbReference type="KEGG" id="sil:SPO0728"/>
<dbReference type="KEGG" id="sil:SPO3498"/>
<dbReference type="eggNOG" id="COG0050">
    <property type="taxonomic scope" value="Bacteria"/>
</dbReference>
<dbReference type="HOGENOM" id="CLU_007265_0_1_5"/>
<dbReference type="OrthoDB" id="9803139at2"/>
<dbReference type="Proteomes" id="UP000001023">
    <property type="component" value="Chromosome"/>
</dbReference>
<dbReference type="GO" id="GO:0005737">
    <property type="term" value="C:cytoplasm"/>
    <property type="evidence" value="ECO:0007669"/>
    <property type="project" value="UniProtKB-SubCell"/>
</dbReference>
<dbReference type="GO" id="GO:0005525">
    <property type="term" value="F:GTP binding"/>
    <property type="evidence" value="ECO:0007669"/>
    <property type="project" value="UniProtKB-UniRule"/>
</dbReference>
<dbReference type="GO" id="GO:0003924">
    <property type="term" value="F:GTPase activity"/>
    <property type="evidence" value="ECO:0007669"/>
    <property type="project" value="InterPro"/>
</dbReference>
<dbReference type="GO" id="GO:0097216">
    <property type="term" value="F:guanosine tetraphosphate binding"/>
    <property type="evidence" value="ECO:0007669"/>
    <property type="project" value="UniProtKB-ARBA"/>
</dbReference>
<dbReference type="GO" id="GO:0003746">
    <property type="term" value="F:translation elongation factor activity"/>
    <property type="evidence" value="ECO:0007669"/>
    <property type="project" value="UniProtKB-UniRule"/>
</dbReference>
<dbReference type="CDD" id="cd01884">
    <property type="entry name" value="EF_Tu"/>
    <property type="match status" value="1"/>
</dbReference>
<dbReference type="CDD" id="cd03697">
    <property type="entry name" value="EFTU_II"/>
    <property type="match status" value="1"/>
</dbReference>
<dbReference type="CDD" id="cd03707">
    <property type="entry name" value="EFTU_III"/>
    <property type="match status" value="1"/>
</dbReference>
<dbReference type="FunFam" id="2.40.30.10:FF:000001">
    <property type="entry name" value="Elongation factor Tu"/>
    <property type="match status" value="1"/>
</dbReference>
<dbReference type="FunFam" id="3.40.50.300:FF:000003">
    <property type="entry name" value="Elongation factor Tu"/>
    <property type="match status" value="1"/>
</dbReference>
<dbReference type="Gene3D" id="3.40.50.300">
    <property type="entry name" value="P-loop containing nucleotide triphosphate hydrolases"/>
    <property type="match status" value="1"/>
</dbReference>
<dbReference type="Gene3D" id="2.40.30.10">
    <property type="entry name" value="Translation factors"/>
    <property type="match status" value="2"/>
</dbReference>
<dbReference type="HAMAP" id="MF_00118_B">
    <property type="entry name" value="EF_Tu_B"/>
    <property type="match status" value="1"/>
</dbReference>
<dbReference type="InterPro" id="IPR041709">
    <property type="entry name" value="EF-Tu_GTP-bd"/>
</dbReference>
<dbReference type="InterPro" id="IPR050055">
    <property type="entry name" value="EF-Tu_GTPase"/>
</dbReference>
<dbReference type="InterPro" id="IPR004161">
    <property type="entry name" value="EFTu-like_2"/>
</dbReference>
<dbReference type="InterPro" id="IPR033720">
    <property type="entry name" value="EFTU_2"/>
</dbReference>
<dbReference type="InterPro" id="IPR031157">
    <property type="entry name" value="G_TR_CS"/>
</dbReference>
<dbReference type="InterPro" id="IPR027417">
    <property type="entry name" value="P-loop_NTPase"/>
</dbReference>
<dbReference type="InterPro" id="IPR005225">
    <property type="entry name" value="Small_GTP-bd"/>
</dbReference>
<dbReference type="InterPro" id="IPR000795">
    <property type="entry name" value="T_Tr_GTP-bd_dom"/>
</dbReference>
<dbReference type="InterPro" id="IPR009000">
    <property type="entry name" value="Transl_B-barrel_sf"/>
</dbReference>
<dbReference type="InterPro" id="IPR009001">
    <property type="entry name" value="Transl_elong_EF1A/Init_IF2_C"/>
</dbReference>
<dbReference type="InterPro" id="IPR004541">
    <property type="entry name" value="Transl_elong_EFTu/EF1A_bac/org"/>
</dbReference>
<dbReference type="InterPro" id="IPR004160">
    <property type="entry name" value="Transl_elong_EFTu/EF1A_C"/>
</dbReference>
<dbReference type="NCBIfam" id="TIGR00485">
    <property type="entry name" value="EF-Tu"/>
    <property type="match status" value="1"/>
</dbReference>
<dbReference type="NCBIfam" id="NF000766">
    <property type="entry name" value="PRK00049.1"/>
    <property type="match status" value="1"/>
</dbReference>
<dbReference type="NCBIfam" id="NF009372">
    <property type="entry name" value="PRK12735.1"/>
    <property type="match status" value="1"/>
</dbReference>
<dbReference type="NCBIfam" id="NF009373">
    <property type="entry name" value="PRK12736.1"/>
    <property type="match status" value="1"/>
</dbReference>
<dbReference type="NCBIfam" id="TIGR00231">
    <property type="entry name" value="small_GTP"/>
    <property type="match status" value="1"/>
</dbReference>
<dbReference type="PANTHER" id="PTHR43721:SF22">
    <property type="entry name" value="ELONGATION FACTOR TU, MITOCHONDRIAL"/>
    <property type="match status" value="1"/>
</dbReference>
<dbReference type="PANTHER" id="PTHR43721">
    <property type="entry name" value="ELONGATION FACTOR TU-RELATED"/>
    <property type="match status" value="1"/>
</dbReference>
<dbReference type="Pfam" id="PF00009">
    <property type="entry name" value="GTP_EFTU"/>
    <property type="match status" value="1"/>
</dbReference>
<dbReference type="Pfam" id="PF03144">
    <property type="entry name" value="GTP_EFTU_D2"/>
    <property type="match status" value="1"/>
</dbReference>
<dbReference type="Pfam" id="PF03143">
    <property type="entry name" value="GTP_EFTU_D3"/>
    <property type="match status" value="1"/>
</dbReference>
<dbReference type="PRINTS" id="PR00315">
    <property type="entry name" value="ELONGATNFCT"/>
</dbReference>
<dbReference type="SUPFAM" id="SSF50465">
    <property type="entry name" value="EF-Tu/eEF-1alpha/eIF2-gamma C-terminal domain"/>
    <property type="match status" value="1"/>
</dbReference>
<dbReference type="SUPFAM" id="SSF52540">
    <property type="entry name" value="P-loop containing nucleoside triphosphate hydrolases"/>
    <property type="match status" value="1"/>
</dbReference>
<dbReference type="SUPFAM" id="SSF50447">
    <property type="entry name" value="Translation proteins"/>
    <property type="match status" value="1"/>
</dbReference>
<dbReference type="PROSITE" id="PS00301">
    <property type="entry name" value="G_TR_1"/>
    <property type="match status" value="1"/>
</dbReference>
<dbReference type="PROSITE" id="PS51722">
    <property type="entry name" value="G_TR_2"/>
    <property type="match status" value="1"/>
</dbReference>
<gene>
    <name evidence="2" type="primary">tuf1</name>
    <name type="synonym">tuf-1</name>
    <name type="ordered locus">SPO0728</name>
</gene>
<gene>
    <name evidence="2" type="primary">tuf2</name>
    <name type="synonym">tuf-2</name>
    <name type="ordered locus">SPO3498</name>
</gene>
<keyword id="KW-0963">Cytoplasm</keyword>
<keyword id="KW-0251">Elongation factor</keyword>
<keyword id="KW-0342">GTP-binding</keyword>
<keyword id="KW-0378">Hydrolase</keyword>
<keyword id="KW-0460">Magnesium</keyword>
<keyword id="KW-0479">Metal-binding</keyword>
<keyword id="KW-0547">Nucleotide-binding</keyword>
<keyword id="KW-0648">Protein biosynthesis</keyword>
<keyword id="KW-1185">Reference proteome</keyword>
<proteinExistence type="inferred from homology"/>
<name>EFTU_RUEPO</name>
<reference key="1">
    <citation type="journal article" date="2004" name="Nature">
        <title>Genome sequence of Silicibacter pomeroyi reveals adaptations to the marine environment.</title>
        <authorList>
            <person name="Moran M.A."/>
            <person name="Buchan A."/>
            <person name="Gonzalez J.M."/>
            <person name="Heidelberg J.F."/>
            <person name="Whitman W.B."/>
            <person name="Kiene R.P."/>
            <person name="Henriksen J.R."/>
            <person name="King G.M."/>
            <person name="Belas R."/>
            <person name="Fuqua C."/>
            <person name="Brinkac L.M."/>
            <person name="Lewis M."/>
            <person name="Johri S."/>
            <person name="Weaver B."/>
            <person name="Pai G."/>
            <person name="Eisen J.A."/>
            <person name="Rahe E."/>
            <person name="Sheldon W.M."/>
            <person name="Ye W."/>
            <person name="Miller T.R."/>
            <person name="Carlton J."/>
            <person name="Rasko D.A."/>
            <person name="Paulsen I.T."/>
            <person name="Ren Q."/>
            <person name="Daugherty S.C."/>
            <person name="DeBoy R.T."/>
            <person name="Dodson R.J."/>
            <person name="Durkin A.S."/>
            <person name="Madupu R."/>
            <person name="Nelson W.C."/>
            <person name="Sullivan S.A."/>
            <person name="Rosovitz M.J."/>
            <person name="Haft D.H."/>
            <person name="Selengut J."/>
            <person name="Ward N."/>
        </authorList>
    </citation>
    <scope>NUCLEOTIDE SEQUENCE [LARGE SCALE GENOMIC DNA]</scope>
    <source>
        <strain>ATCC 700808 / DSM 15171 / DSS-3</strain>
    </source>
</reference>
<reference key="2">
    <citation type="journal article" date="2014" name="Stand. Genomic Sci.">
        <title>An updated genome annotation for the model marine bacterium Ruegeria pomeroyi DSS-3.</title>
        <authorList>
            <person name="Rivers A.R."/>
            <person name="Smith C.B."/>
            <person name="Moran M.A."/>
        </authorList>
    </citation>
    <scope>GENOME REANNOTATION</scope>
    <source>
        <strain>ATCC 700808 / DSM 15171 / DSS-3</strain>
    </source>
</reference>
<comment type="function">
    <text evidence="2">GTP hydrolase that promotes the GTP-dependent binding of aminoacyl-tRNA to the A-site of ribosomes during protein biosynthesis.</text>
</comment>
<comment type="catalytic activity">
    <reaction evidence="2">
        <text>GTP + H2O = GDP + phosphate + H(+)</text>
        <dbReference type="Rhea" id="RHEA:19669"/>
        <dbReference type="ChEBI" id="CHEBI:15377"/>
        <dbReference type="ChEBI" id="CHEBI:15378"/>
        <dbReference type="ChEBI" id="CHEBI:37565"/>
        <dbReference type="ChEBI" id="CHEBI:43474"/>
        <dbReference type="ChEBI" id="CHEBI:58189"/>
        <dbReference type="EC" id="3.6.5.3"/>
    </reaction>
    <physiologicalReaction direction="left-to-right" evidence="2">
        <dbReference type="Rhea" id="RHEA:19670"/>
    </physiologicalReaction>
</comment>
<comment type="subunit">
    <text evidence="2">Monomer.</text>
</comment>
<comment type="subcellular location">
    <subcellularLocation>
        <location evidence="2">Cytoplasm</location>
    </subcellularLocation>
</comment>
<comment type="similarity">
    <text evidence="2">Belongs to the TRAFAC class translation factor GTPase superfamily. Classic translation factor GTPase family. EF-Tu/EF-1A subfamily.</text>
</comment>
<evidence type="ECO:0000250" key="1"/>
<evidence type="ECO:0000255" key="2">
    <source>
        <dbReference type="HAMAP-Rule" id="MF_00118"/>
    </source>
</evidence>
<organism>
    <name type="scientific">Ruegeria pomeroyi (strain ATCC 700808 / DSM 15171 / DSS-3)</name>
    <name type="common">Silicibacter pomeroyi</name>
    <dbReference type="NCBI Taxonomy" id="246200"/>
    <lineage>
        <taxon>Bacteria</taxon>
        <taxon>Pseudomonadati</taxon>
        <taxon>Pseudomonadota</taxon>
        <taxon>Alphaproteobacteria</taxon>
        <taxon>Rhodobacterales</taxon>
        <taxon>Roseobacteraceae</taxon>
        <taxon>Ruegeria</taxon>
    </lineage>
</organism>
<protein>
    <recommendedName>
        <fullName evidence="2">Elongation factor Tu</fullName>
        <shortName evidence="2">EF-Tu</shortName>
        <ecNumber evidence="2">3.6.5.3</ecNumber>
    </recommendedName>
</protein>